<reference key="1">
    <citation type="journal article" date="2010" name="Genome Biol.">
        <title>Structure and dynamics of the pan-genome of Streptococcus pneumoniae and closely related species.</title>
        <authorList>
            <person name="Donati C."/>
            <person name="Hiller N.L."/>
            <person name="Tettelin H."/>
            <person name="Muzzi A."/>
            <person name="Croucher N.J."/>
            <person name="Angiuoli S.V."/>
            <person name="Oggioni M."/>
            <person name="Dunning Hotopp J.C."/>
            <person name="Hu F.Z."/>
            <person name="Riley D.R."/>
            <person name="Covacci A."/>
            <person name="Mitchell T.J."/>
            <person name="Bentley S.D."/>
            <person name="Kilian M."/>
            <person name="Ehrlich G.D."/>
            <person name="Rappuoli R."/>
            <person name="Moxon E.R."/>
            <person name="Masignani V."/>
        </authorList>
    </citation>
    <scope>NUCLEOTIDE SEQUENCE [LARGE SCALE GENOMIC DNA]</scope>
    <source>
        <strain>Hungary19A-6</strain>
    </source>
</reference>
<protein>
    <recommendedName>
        <fullName evidence="1">Glycerol kinase</fullName>
        <ecNumber evidence="1">2.7.1.30</ecNumber>
    </recommendedName>
    <alternativeName>
        <fullName evidence="1">ATP:glycerol 3-phosphotransferase</fullName>
    </alternativeName>
    <alternativeName>
        <fullName evidence="1">Glycerokinase</fullName>
        <shortName evidence="1">GK</shortName>
    </alternativeName>
</protein>
<feature type="chain" id="PRO_1000098765" description="Glycerol kinase">
    <location>
        <begin position="1"/>
        <end position="502"/>
    </location>
</feature>
<feature type="binding site" evidence="1">
    <location>
        <position position="14"/>
    </location>
    <ligand>
        <name>ADP</name>
        <dbReference type="ChEBI" id="CHEBI:456216"/>
    </ligand>
</feature>
<feature type="binding site" evidence="1">
    <location>
        <position position="14"/>
    </location>
    <ligand>
        <name>ATP</name>
        <dbReference type="ChEBI" id="CHEBI:30616"/>
    </ligand>
</feature>
<feature type="binding site" evidence="1">
    <location>
        <position position="14"/>
    </location>
    <ligand>
        <name>sn-glycerol 3-phosphate</name>
        <dbReference type="ChEBI" id="CHEBI:57597"/>
    </ligand>
</feature>
<feature type="binding site" evidence="1">
    <location>
        <position position="15"/>
    </location>
    <ligand>
        <name>ATP</name>
        <dbReference type="ChEBI" id="CHEBI:30616"/>
    </ligand>
</feature>
<feature type="binding site" evidence="1">
    <location>
        <position position="16"/>
    </location>
    <ligand>
        <name>ATP</name>
        <dbReference type="ChEBI" id="CHEBI:30616"/>
    </ligand>
</feature>
<feature type="binding site" evidence="1">
    <location>
        <position position="18"/>
    </location>
    <ligand>
        <name>ADP</name>
        <dbReference type="ChEBI" id="CHEBI:456216"/>
    </ligand>
</feature>
<feature type="binding site" evidence="1">
    <location>
        <position position="84"/>
    </location>
    <ligand>
        <name>glycerol</name>
        <dbReference type="ChEBI" id="CHEBI:17754"/>
    </ligand>
</feature>
<feature type="binding site" evidence="1">
    <location>
        <position position="84"/>
    </location>
    <ligand>
        <name>sn-glycerol 3-phosphate</name>
        <dbReference type="ChEBI" id="CHEBI:57597"/>
    </ligand>
</feature>
<feature type="binding site" evidence="1">
    <location>
        <position position="85"/>
    </location>
    <ligand>
        <name>glycerol</name>
        <dbReference type="ChEBI" id="CHEBI:17754"/>
    </ligand>
</feature>
<feature type="binding site" evidence="1">
    <location>
        <position position="85"/>
    </location>
    <ligand>
        <name>sn-glycerol 3-phosphate</name>
        <dbReference type="ChEBI" id="CHEBI:57597"/>
    </ligand>
</feature>
<feature type="binding site" evidence="1">
    <location>
        <position position="136"/>
    </location>
    <ligand>
        <name>glycerol</name>
        <dbReference type="ChEBI" id="CHEBI:17754"/>
    </ligand>
</feature>
<feature type="binding site" evidence="1">
    <location>
        <position position="136"/>
    </location>
    <ligand>
        <name>sn-glycerol 3-phosphate</name>
        <dbReference type="ChEBI" id="CHEBI:57597"/>
    </ligand>
</feature>
<feature type="binding site" evidence="1">
    <location>
        <position position="246"/>
    </location>
    <ligand>
        <name>glycerol</name>
        <dbReference type="ChEBI" id="CHEBI:17754"/>
    </ligand>
</feature>
<feature type="binding site" evidence="1">
    <location>
        <position position="246"/>
    </location>
    <ligand>
        <name>sn-glycerol 3-phosphate</name>
        <dbReference type="ChEBI" id="CHEBI:57597"/>
    </ligand>
</feature>
<feature type="binding site" evidence="1">
    <location>
        <position position="247"/>
    </location>
    <ligand>
        <name>glycerol</name>
        <dbReference type="ChEBI" id="CHEBI:17754"/>
    </ligand>
</feature>
<feature type="binding site" evidence="1">
    <location>
        <position position="268"/>
    </location>
    <ligand>
        <name>ADP</name>
        <dbReference type="ChEBI" id="CHEBI:456216"/>
    </ligand>
</feature>
<feature type="binding site" evidence="1">
    <location>
        <position position="268"/>
    </location>
    <ligand>
        <name>ATP</name>
        <dbReference type="ChEBI" id="CHEBI:30616"/>
    </ligand>
</feature>
<feature type="binding site" evidence="1">
    <location>
        <position position="311"/>
    </location>
    <ligand>
        <name>ADP</name>
        <dbReference type="ChEBI" id="CHEBI:456216"/>
    </ligand>
</feature>
<feature type="binding site" evidence="1">
    <location>
        <position position="311"/>
    </location>
    <ligand>
        <name>ATP</name>
        <dbReference type="ChEBI" id="CHEBI:30616"/>
    </ligand>
</feature>
<feature type="binding site" evidence="1">
    <location>
        <position position="315"/>
    </location>
    <ligand>
        <name>ATP</name>
        <dbReference type="ChEBI" id="CHEBI:30616"/>
    </ligand>
</feature>
<feature type="binding site" evidence="1">
    <location>
        <position position="412"/>
    </location>
    <ligand>
        <name>ADP</name>
        <dbReference type="ChEBI" id="CHEBI:456216"/>
    </ligand>
</feature>
<feature type="binding site" evidence="1">
    <location>
        <position position="412"/>
    </location>
    <ligand>
        <name>ATP</name>
        <dbReference type="ChEBI" id="CHEBI:30616"/>
    </ligand>
</feature>
<feature type="binding site" evidence="1">
    <location>
        <position position="416"/>
    </location>
    <ligand>
        <name>ADP</name>
        <dbReference type="ChEBI" id="CHEBI:456216"/>
    </ligand>
</feature>
<feature type="modified residue" description="Phosphohistidine; by HPr" evidence="1">
    <location>
        <position position="232"/>
    </location>
</feature>
<accession>B1I9Z6</accession>
<comment type="function">
    <text evidence="1">Key enzyme in the regulation of glycerol uptake and metabolism. Catalyzes the phosphorylation of glycerol to yield sn-glycerol 3-phosphate.</text>
</comment>
<comment type="catalytic activity">
    <reaction evidence="1">
        <text>glycerol + ATP = sn-glycerol 3-phosphate + ADP + H(+)</text>
        <dbReference type="Rhea" id="RHEA:21644"/>
        <dbReference type="ChEBI" id="CHEBI:15378"/>
        <dbReference type="ChEBI" id="CHEBI:17754"/>
        <dbReference type="ChEBI" id="CHEBI:30616"/>
        <dbReference type="ChEBI" id="CHEBI:57597"/>
        <dbReference type="ChEBI" id="CHEBI:456216"/>
        <dbReference type="EC" id="2.7.1.30"/>
    </reaction>
</comment>
<comment type="activity regulation">
    <text evidence="1">Activated by phosphorylation and inhibited by fructose 1,6-bisphosphate (FBP).</text>
</comment>
<comment type="pathway">
    <text evidence="1">Polyol metabolism; glycerol degradation via glycerol kinase pathway; sn-glycerol 3-phosphate from glycerol: step 1/1.</text>
</comment>
<comment type="subunit">
    <text evidence="1">Homotetramer and homodimer (in equilibrium).</text>
</comment>
<comment type="PTM">
    <text evidence="1">The phosphoenolpyruvate-dependent sugar phosphotransferase system (PTS), including enzyme I, and histidine-containing protein (HPr) are required for the phosphorylation, which leads to the activation of the enzyme.</text>
</comment>
<comment type="similarity">
    <text evidence="1">Belongs to the FGGY kinase family.</text>
</comment>
<name>GLPK_STRPI</name>
<gene>
    <name evidence="1" type="primary">glpK</name>
    <name type="ordered locus">SPH_2381</name>
</gene>
<evidence type="ECO:0000255" key="1">
    <source>
        <dbReference type="HAMAP-Rule" id="MF_00186"/>
    </source>
</evidence>
<organism>
    <name type="scientific">Streptococcus pneumoniae (strain Hungary19A-6)</name>
    <dbReference type="NCBI Taxonomy" id="487214"/>
    <lineage>
        <taxon>Bacteria</taxon>
        <taxon>Bacillati</taxon>
        <taxon>Bacillota</taxon>
        <taxon>Bacilli</taxon>
        <taxon>Lactobacillales</taxon>
        <taxon>Streptococcaceae</taxon>
        <taxon>Streptococcus</taxon>
    </lineage>
</organism>
<dbReference type="EC" id="2.7.1.30" evidence="1"/>
<dbReference type="EMBL" id="CP000936">
    <property type="protein sequence ID" value="ACA36764.1"/>
    <property type="molecule type" value="Genomic_DNA"/>
</dbReference>
<dbReference type="RefSeq" id="WP_000076774.1">
    <property type="nucleotide sequence ID" value="NC_010380.1"/>
</dbReference>
<dbReference type="SMR" id="B1I9Z6"/>
<dbReference type="KEGG" id="spv:SPH_2381"/>
<dbReference type="HOGENOM" id="CLU_009281_2_3_9"/>
<dbReference type="UniPathway" id="UPA00618">
    <property type="reaction ID" value="UER00672"/>
</dbReference>
<dbReference type="Proteomes" id="UP000002163">
    <property type="component" value="Chromosome"/>
</dbReference>
<dbReference type="GO" id="GO:0005829">
    <property type="term" value="C:cytosol"/>
    <property type="evidence" value="ECO:0007669"/>
    <property type="project" value="TreeGrafter"/>
</dbReference>
<dbReference type="GO" id="GO:0005524">
    <property type="term" value="F:ATP binding"/>
    <property type="evidence" value="ECO:0007669"/>
    <property type="project" value="UniProtKB-UniRule"/>
</dbReference>
<dbReference type="GO" id="GO:0004370">
    <property type="term" value="F:glycerol kinase activity"/>
    <property type="evidence" value="ECO:0000250"/>
    <property type="project" value="UniProtKB"/>
</dbReference>
<dbReference type="GO" id="GO:0019563">
    <property type="term" value="P:glycerol catabolic process"/>
    <property type="evidence" value="ECO:0007669"/>
    <property type="project" value="UniProtKB-UniRule"/>
</dbReference>
<dbReference type="GO" id="GO:0006071">
    <property type="term" value="P:glycerol metabolic process"/>
    <property type="evidence" value="ECO:0000250"/>
    <property type="project" value="UniProtKB"/>
</dbReference>
<dbReference type="GO" id="GO:0006072">
    <property type="term" value="P:glycerol-3-phosphate metabolic process"/>
    <property type="evidence" value="ECO:0007669"/>
    <property type="project" value="InterPro"/>
</dbReference>
<dbReference type="CDD" id="cd07786">
    <property type="entry name" value="FGGY_EcGK_like"/>
    <property type="match status" value="1"/>
</dbReference>
<dbReference type="FunFam" id="3.30.420.40:FF:000007">
    <property type="entry name" value="Glycerol kinase"/>
    <property type="match status" value="1"/>
</dbReference>
<dbReference type="FunFam" id="3.30.420.40:FF:000008">
    <property type="entry name" value="Glycerol kinase"/>
    <property type="match status" value="1"/>
</dbReference>
<dbReference type="Gene3D" id="3.30.420.40">
    <property type="match status" value="2"/>
</dbReference>
<dbReference type="HAMAP" id="MF_00186">
    <property type="entry name" value="Glycerol_kin"/>
    <property type="match status" value="1"/>
</dbReference>
<dbReference type="InterPro" id="IPR043129">
    <property type="entry name" value="ATPase_NBD"/>
</dbReference>
<dbReference type="InterPro" id="IPR000577">
    <property type="entry name" value="Carb_kinase_FGGY"/>
</dbReference>
<dbReference type="InterPro" id="IPR018483">
    <property type="entry name" value="Carb_kinase_FGGY_CS"/>
</dbReference>
<dbReference type="InterPro" id="IPR018485">
    <property type="entry name" value="FGGY_C"/>
</dbReference>
<dbReference type="InterPro" id="IPR018484">
    <property type="entry name" value="FGGY_N"/>
</dbReference>
<dbReference type="InterPro" id="IPR005999">
    <property type="entry name" value="Glycerol_kin"/>
</dbReference>
<dbReference type="NCBIfam" id="TIGR01311">
    <property type="entry name" value="glycerol_kin"/>
    <property type="match status" value="1"/>
</dbReference>
<dbReference type="NCBIfam" id="NF000756">
    <property type="entry name" value="PRK00047.1"/>
    <property type="match status" value="1"/>
</dbReference>
<dbReference type="PANTHER" id="PTHR10196:SF69">
    <property type="entry name" value="GLYCEROL KINASE"/>
    <property type="match status" value="1"/>
</dbReference>
<dbReference type="PANTHER" id="PTHR10196">
    <property type="entry name" value="SUGAR KINASE"/>
    <property type="match status" value="1"/>
</dbReference>
<dbReference type="Pfam" id="PF02782">
    <property type="entry name" value="FGGY_C"/>
    <property type="match status" value="1"/>
</dbReference>
<dbReference type="Pfam" id="PF00370">
    <property type="entry name" value="FGGY_N"/>
    <property type="match status" value="1"/>
</dbReference>
<dbReference type="PIRSF" id="PIRSF000538">
    <property type="entry name" value="GlpK"/>
    <property type="match status" value="1"/>
</dbReference>
<dbReference type="SUPFAM" id="SSF53067">
    <property type="entry name" value="Actin-like ATPase domain"/>
    <property type="match status" value="2"/>
</dbReference>
<dbReference type="PROSITE" id="PS00933">
    <property type="entry name" value="FGGY_KINASES_1"/>
    <property type="match status" value="1"/>
</dbReference>
<dbReference type="PROSITE" id="PS00445">
    <property type="entry name" value="FGGY_KINASES_2"/>
    <property type="match status" value="1"/>
</dbReference>
<proteinExistence type="inferred from homology"/>
<sequence>MSQEKYIMAIDQGTTSSRAIIFNKKGEKVSSSQKEFTQIFPQAGWVEHNANEIWNSVQSVIAGAFIESGVKPNQIEAIGITNQRETTVVWDKKTGLPIYNAIVWQSRQTAPLAEQLKSQGYVEKFHEKTGLIIDAYFSATKVRWILDHVEGAQERAEKGELLFGTIDTWLVWKLTDGAAHVTDYSNAARTMLYNIKELKWDDEILEILNIPKAILPEVRSNSEIYGKTAPFHFYGGEVPISGMAGDQQAALFGQLAFEPGMVKNTYGTGSFIIMNTGEEMQLSENNLLTTIGYGINGKVYYALEGSIFIAGSAIQWLRDGLRMVENSPESEKYARDSHNNDEVYVVPAFTGLGAPYWNQNARGSVFGLTRGTSKEDFIKATLQSIAYQVRDIIDTMQMDTQTAIQVLKVDGGAAMNNFLMQFQADILGIDIARAKNLETTALGAAFLAGLSVGYWKDLDELKLLNETGELFEPSMNESRKEQLYKGWKKAVKATQVFAEVDD</sequence>
<keyword id="KW-0067">ATP-binding</keyword>
<keyword id="KW-0319">Glycerol metabolism</keyword>
<keyword id="KW-0418">Kinase</keyword>
<keyword id="KW-0547">Nucleotide-binding</keyword>
<keyword id="KW-0597">Phosphoprotein</keyword>
<keyword id="KW-0808">Transferase</keyword>